<evidence type="ECO:0000250" key="1"/>
<evidence type="ECO:0000255" key="2">
    <source>
        <dbReference type="PROSITE-ProRule" id="PRU00100"/>
    </source>
</evidence>
<evidence type="ECO:0000255" key="3">
    <source>
        <dbReference type="PROSITE-ProRule" id="PRU00143"/>
    </source>
</evidence>
<evidence type="ECO:0000255" key="4">
    <source>
        <dbReference type="PROSITE-ProRule" id="PRU00224"/>
    </source>
</evidence>
<evidence type="ECO:0000256" key="5">
    <source>
        <dbReference type="SAM" id="MobiDB-lite"/>
    </source>
</evidence>
<evidence type="ECO:0000305" key="6"/>
<reference key="1">
    <citation type="submission" date="2006-12" db="EMBL/GenBank/DDBJ databases">
        <authorList>
            <consortium name="NIH - Xenopus Gene Collection (XGC) project"/>
        </authorList>
    </citation>
    <scope>NUCLEOTIDE SEQUENCE [LARGE SCALE MRNA]</scope>
    <source>
        <tissue>Testis</tissue>
    </source>
</reference>
<name>MAGI3_XENTR</name>
<proteinExistence type="evidence at transcript level"/>
<organism>
    <name type="scientific">Xenopus tropicalis</name>
    <name type="common">Western clawed frog</name>
    <name type="synonym">Silurana tropicalis</name>
    <dbReference type="NCBI Taxonomy" id="8364"/>
    <lineage>
        <taxon>Eukaryota</taxon>
        <taxon>Metazoa</taxon>
        <taxon>Chordata</taxon>
        <taxon>Craniata</taxon>
        <taxon>Vertebrata</taxon>
        <taxon>Euteleostomi</taxon>
        <taxon>Amphibia</taxon>
        <taxon>Batrachia</taxon>
        <taxon>Anura</taxon>
        <taxon>Pipoidea</taxon>
        <taxon>Pipidae</taxon>
        <taxon>Xenopodinae</taxon>
        <taxon>Xenopus</taxon>
        <taxon>Silurana</taxon>
    </lineage>
</organism>
<keyword id="KW-0067">ATP-binding</keyword>
<keyword id="KW-0965">Cell junction</keyword>
<keyword id="KW-1003">Cell membrane</keyword>
<keyword id="KW-0472">Membrane</keyword>
<keyword id="KW-0547">Nucleotide-binding</keyword>
<keyword id="KW-1185">Reference proteome</keyword>
<keyword id="KW-0677">Repeat</keyword>
<keyword id="KW-0796">Tight junction</keyword>
<accession>A1A5G4</accession>
<feature type="chain" id="PRO_0000341411" description="Membrane-associated guanylate kinase, WW and PDZ domain-containing protein 3">
    <location>
        <begin position="1"/>
        <end position="1107"/>
    </location>
</feature>
<feature type="domain" description="PDZ 1" evidence="3">
    <location>
        <begin position="17"/>
        <end position="102"/>
    </location>
</feature>
<feature type="domain" description="Guanylate kinase-like" evidence="2">
    <location>
        <begin position="110"/>
        <end position="284"/>
    </location>
</feature>
<feature type="domain" description="WW 1" evidence="4">
    <location>
        <begin position="289"/>
        <end position="322"/>
    </location>
</feature>
<feature type="domain" description="WW 2" evidence="4">
    <location>
        <begin position="335"/>
        <end position="368"/>
    </location>
</feature>
<feature type="domain" description="PDZ 2" evidence="3">
    <location>
        <begin position="407"/>
        <end position="489"/>
    </location>
</feature>
<feature type="domain" description="PDZ 3" evidence="3">
    <location>
        <begin position="577"/>
        <end position="653"/>
    </location>
</feature>
<feature type="domain" description="PDZ 4" evidence="3">
    <location>
        <begin position="727"/>
        <end position="809"/>
    </location>
</feature>
<feature type="domain" description="PDZ 5" evidence="3">
    <location>
        <begin position="853"/>
        <end position="940"/>
    </location>
</feature>
<feature type="domain" description="PDZ 6" evidence="3">
    <location>
        <begin position="1003"/>
        <end position="1085"/>
    </location>
</feature>
<feature type="region of interest" description="Disordered" evidence="5">
    <location>
        <begin position="210"/>
        <end position="277"/>
    </location>
</feature>
<feature type="region of interest" description="Disordered" evidence="5">
    <location>
        <begin position="374"/>
        <end position="398"/>
    </location>
</feature>
<feature type="region of interest" description="Disordered" evidence="5">
    <location>
        <begin position="941"/>
        <end position="975"/>
    </location>
</feature>
<feature type="compositionally biased region" description="Polar residues" evidence="5">
    <location>
        <begin position="220"/>
        <end position="231"/>
    </location>
</feature>
<feature type="compositionally biased region" description="Acidic residues" evidence="5">
    <location>
        <begin position="232"/>
        <end position="241"/>
    </location>
</feature>
<feature type="compositionally biased region" description="Basic and acidic residues" evidence="5">
    <location>
        <begin position="251"/>
        <end position="261"/>
    </location>
</feature>
<feature type="compositionally biased region" description="Polar residues" evidence="5">
    <location>
        <begin position="267"/>
        <end position="277"/>
    </location>
</feature>
<feature type="compositionally biased region" description="Polar residues" evidence="5">
    <location>
        <begin position="947"/>
        <end position="957"/>
    </location>
</feature>
<feature type="binding site" evidence="2">
    <location>
        <begin position="117"/>
        <end position="124"/>
    </location>
    <ligand>
        <name>ATP</name>
        <dbReference type="ChEBI" id="CHEBI:30616"/>
    </ligand>
</feature>
<gene>
    <name type="primary">magi3</name>
</gene>
<dbReference type="EMBL" id="BC128638">
    <property type="protein sequence ID" value="AAI28639.1"/>
    <property type="molecule type" value="mRNA"/>
</dbReference>
<dbReference type="RefSeq" id="NP_001090712.1">
    <property type="nucleotide sequence ID" value="NM_001097243.1"/>
</dbReference>
<dbReference type="SMR" id="A1A5G4"/>
<dbReference type="FunCoup" id="A1A5G4">
    <property type="interactions" value="1031"/>
</dbReference>
<dbReference type="STRING" id="8364.ENSXETP00000048643"/>
<dbReference type="PaxDb" id="8364-ENSXETP00000028891"/>
<dbReference type="GeneID" id="100036692"/>
<dbReference type="KEGG" id="xtr:100036692"/>
<dbReference type="AGR" id="Xenbase:XB-GENE-981179"/>
<dbReference type="CTD" id="260425"/>
<dbReference type="Xenbase" id="XB-GENE-981179">
    <property type="gene designation" value="magi3"/>
</dbReference>
<dbReference type="eggNOG" id="KOG0707">
    <property type="taxonomic scope" value="Eukaryota"/>
</dbReference>
<dbReference type="eggNOG" id="KOG3209">
    <property type="taxonomic scope" value="Eukaryota"/>
</dbReference>
<dbReference type="InParanoid" id="A1A5G4"/>
<dbReference type="OrthoDB" id="66881at2759"/>
<dbReference type="Proteomes" id="UP000008143">
    <property type="component" value="Chromosome 2"/>
</dbReference>
<dbReference type="GO" id="GO:0005923">
    <property type="term" value="C:bicellular tight junction"/>
    <property type="evidence" value="ECO:0007669"/>
    <property type="project" value="UniProtKB-SubCell"/>
</dbReference>
<dbReference type="GO" id="GO:0005886">
    <property type="term" value="C:plasma membrane"/>
    <property type="evidence" value="ECO:0007669"/>
    <property type="project" value="UniProtKB-SubCell"/>
</dbReference>
<dbReference type="GO" id="GO:0005524">
    <property type="term" value="F:ATP binding"/>
    <property type="evidence" value="ECO:0007669"/>
    <property type="project" value="UniProtKB-KW"/>
</dbReference>
<dbReference type="CDD" id="cd06730">
    <property type="entry name" value="PDZ0_MAGI-1_3-like"/>
    <property type="match status" value="1"/>
</dbReference>
<dbReference type="CDD" id="cd06731">
    <property type="entry name" value="PDZ1_MAGI-1_3-like"/>
    <property type="match status" value="1"/>
</dbReference>
<dbReference type="CDD" id="cd06732">
    <property type="entry name" value="PDZ2_MAGI-1_3-like"/>
    <property type="match status" value="1"/>
</dbReference>
<dbReference type="CDD" id="cd06733">
    <property type="entry name" value="PDZ3_MAGI-1_3-like"/>
    <property type="match status" value="1"/>
</dbReference>
<dbReference type="CDD" id="cd06734">
    <property type="entry name" value="PDZ4_MAGI-1_3-like"/>
    <property type="match status" value="1"/>
</dbReference>
<dbReference type="CDD" id="cd06735">
    <property type="entry name" value="PDZ5_MAGI-1_3-like"/>
    <property type="match status" value="1"/>
</dbReference>
<dbReference type="CDD" id="cd00201">
    <property type="entry name" value="WW"/>
    <property type="match status" value="2"/>
</dbReference>
<dbReference type="FunFam" id="2.30.42.10:FF:000005">
    <property type="entry name" value="Membrane associated guanylate kinase, WW and PDZ domain containing 1"/>
    <property type="match status" value="1"/>
</dbReference>
<dbReference type="FunFam" id="2.30.42.10:FF:000006">
    <property type="entry name" value="Membrane associated guanylate kinase, WW and PDZ domain containing 1"/>
    <property type="match status" value="1"/>
</dbReference>
<dbReference type="FunFam" id="2.30.42.10:FF:000012">
    <property type="entry name" value="Membrane associated guanylate kinase, WW and PDZ domain containing 1"/>
    <property type="match status" value="1"/>
</dbReference>
<dbReference type="FunFam" id="2.20.70.10:FF:000001">
    <property type="entry name" value="Membrane-associated guanylate kinase, WW and PDZ domain-containing protein 1"/>
    <property type="match status" value="1"/>
</dbReference>
<dbReference type="FunFam" id="2.30.42.10:FF:000279">
    <property type="entry name" value="Membrane-associated guanylate kinase, WW and PDZ domain-containing protein 3"/>
    <property type="match status" value="1"/>
</dbReference>
<dbReference type="FunFam" id="2.20.70.10:FF:000002">
    <property type="entry name" value="Membrane-associated guanylate kinase, WW and PDZ domain-containing protein 3 isoform 1"/>
    <property type="match status" value="1"/>
</dbReference>
<dbReference type="FunFam" id="2.30.42.10:FF:000042">
    <property type="entry name" value="Membrane-associated guanylate kinase, WW and PDZ domain-containing protein 3 isoform 1"/>
    <property type="match status" value="1"/>
</dbReference>
<dbReference type="FunFam" id="3.30.63.10:FF:000003">
    <property type="entry name" value="Membrane-associated guanylate kinase, WW and PDZ domain-containing protein 3 isoform 1"/>
    <property type="match status" value="1"/>
</dbReference>
<dbReference type="FunFam" id="2.30.42.10:FF:000131">
    <property type="entry name" value="membrane-associated guanylate kinase, WW and PDZ domain-containing protein 3 isoform X1"/>
    <property type="match status" value="1"/>
</dbReference>
<dbReference type="Gene3D" id="2.20.70.10">
    <property type="match status" value="2"/>
</dbReference>
<dbReference type="Gene3D" id="2.30.42.10">
    <property type="match status" value="6"/>
</dbReference>
<dbReference type="Gene3D" id="3.30.63.10">
    <property type="entry name" value="Guanylate Kinase phosphate binding domain"/>
    <property type="match status" value="1"/>
</dbReference>
<dbReference type="InterPro" id="IPR008145">
    <property type="entry name" value="GK/Ca_channel_bsu"/>
</dbReference>
<dbReference type="InterPro" id="IPR008144">
    <property type="entry name" value="Guanylate_kin-like_dom"/>
</dbReference>
<dbReference type="InterPro" id="IPR020590">
    <property type="entry name" value="Guanylate_kinase_CS"/>
</dbReference>
<dbReference type="InterPro" id="IPR027417">
    <property type="entry name" value="P-loop_NTPase"/>
</dbReference>
<dbReference type="InterPro" id="IPR001478">
    <property type="entry name" value="PDZ"/>
</dbReference>
<dbReference type="InterPro" id="IPR036034">
    <property type="entry name" value="PDZ_sf"/>
</dbReference>
<dbReference type="InterPro" id="IPR001202">
    <property type="entry name" value="WW_dom"/>
</dbReference>
<dbReference type="InterPro" id="IPR036020">
    <property type="entry name" value="WW_dom_sf"/>
</dbReference>
<dbReference type="PANTHER" id="PTHR10316">
    <property type="entry name" value="MEMBRANE ASSOCIATED GUANYLATE KINASE-RELATED"/>
    <property type="match status" value="1"/>
</dbReference>
<dbReference type="PANTHER" id="PTHR10316:SF10">
    <property type="entry name" value="MEMBRANE-ASSOCIATED GUANYLATE KINASE, WW AND PDZ DOMAIN-CONTAINING PROTEIN 3"/>
    <property type="match status" value="1"/>
</dbReference>
<dbReference type="Pfam" id="PF00625">
    <property type="entry name" value="Guanylate_kin"/>
    <property type="match status" value="1"/>
</dbReference>
<dbReference type="Pfam" id="PF00595">
    <property type="entry name" value="PDZ"/>
    <property type="match status" value="4"/>
</dbReference>
<dbReference type="Pfam" id="PF00397">
    <property type="entry name" value="WW"/>
    <property type="match status" value="2"/>
</dbReference>
<dbReference type="SMART" id="SM00072">
    <property type="entry name" value="GuKc"/>
    <property type="match status" value="1"/>
</dbReference>
<dbReference type="SMART" id="SM00228">
    <property type="entry name" value="PDZ"/>
    <property type="match status" value="6"/>
</dbReference>
<dbReference type="SMART" id="SM00456">
    <property type="entry name" value="WW"/>
    <property type="match status" value="2"/>
</dbReference>
<dbReference type="SUPFAM" id="SSF52540">
    <property type="entry name" value="P-loop containing nucleoside triphosphate hydrolases"/>
    <property type="match status" value="1"/>
</dbReference>
<dbReference type="SUPFAM" id="SSF50156">
    <property type="entry name" value="PDZ domain-like"/>
    <property type="match status" value="6"/>
</dbReference>
<dbReference type="SUPFAM" id="SSF51045">
    <property type="entry name" value="WW domain"/>
    <property type="match status" value="2"/>
</dbReference>
<dbReference type="PROSITE" id="PS00856">
    <property type="entry name" value="GUANYLATE_KINASE_1"/>
    <property type="match status" value="1"/>
</dbReference>
<dbReference type="PROSITE" id="PS50052">
    <property type="entry name" value="GUANYLATE_KINASE_2"/>
    <property type="match status" value="1"/>
</dbReference>
<dbReference type="PROSITE" id="PS50106">
    <property type="entry name" value="PDZ"/>
    <property type="match status" value="6"/>
</dbReference>
<dbReference type="PROSITE" id="PS01159">
    <property type="entry name" value="WW_DOMAIN_1"/>
    <property type="match status" value="2"/>
</dbReference>
<dbReference type="PROSITE" id="PS50020">
    <property type="entry name" value="WW_DOMAIN_2"/>
    <property type="match status" value="2"/>
</dbReference>
<comment type="function">
    <text evidence="1">Acts as a scaffolding protein at cell-cell junctions, thereby regulating various cellular and signaling processes.</text>
</comment>
<comment type="subcellular location">
    <subcellularLocation>
        <location evidence="1">Cell membrane</location>
        <topology evidence="1">Peripheral membrane protein</topology>
    </subcellularLocation>
    <subcellularLocation>
        <location evidence="1">Cell junction</location>
        <location evidence="1">Tight junction</location>
    </subcellularLocation>
</comment>
<comment type="similarity">
    <text evidence="6">Belongs to the MAGUK family.</text>
</comment>
<sequence length="1107" mass="121840">MSKTLKKKKHWLSKVQECGLSGVGGDPCSLLEIRGGAEHGEFPYLGRQREDVASFIVGKVPSQGDVLLEVNGTPVSGLTHRDTLAVIRHFREPIRLKTVKPGKVINKDLRHYLSLQFQKGSIDHKLQQVIRDNLYLRTIPCTTRSPRDGEVPGVDYNFISVEQFKALEDSGVLLESGTYDGNFYGTPKPPAEPNPFQADPVDQVLFDGEFDTETQRKRTTSVSKMQRTDSSLPEEEDEEEREAVNGSSGSTDHRDRQEPSEWGKTVPSYNQTNSSMDFRNYLTRDENLEPLPKNWEMAYTEAGMIYFIDHNTKTTTWLDPRLCKKAKAPEDCEDGELPYGWEKIEDPQYGTYYVDHINQKTQFDNPVLEAKRKKQLNPAPSEGTVHQEPENSQFTRDPSQLKGALLHTSLKKSAMGFGFTIIGGDRPDEFLQVKNVLKDGPAAQDGKIAPGDVIVDINGTCVLGHTHAEVVQMFQLIPINQYVNMTLCRGYPLPEDSDDPVADIVNTVPPIINGQMLTQGDINMGSQELKSGVIDLDQRGKPGLMVVNGRLNGPSLDIQDQRTSMASSGNSLPELVTIPLLKGPKGFGFAIADSPMGQKVKMILDSQWCPGLQKGDVIKEICHQNVQNLTHIQVVEVLKQFPVGAEVPLLILRGGPPSPSKVTKVKSDKQELMGSIEAIAPGEPLPQPLPFPPNLARSCSPKLDPSEVYKKSKNIFEDKPPNTKDLDVFLRKQESGFGFRVLGGDGPDQAIYIGAIIPLGAAEKDGRLRAADELICIDGVPVKGKSHKQVLDLMTNAARNGHVLLTVRRQIYYTDKQQEEEELQHTPPAHNGSPRLNRIEVSAIPKLPAEAYDVILQRKDNEGFGFVILTSKNKPPPGVIPHKIGRVIEGSPADRCRKLKVGDRISAVNGQSIVELSHDNIVQLIKDAGNTVTLTVIAEEEHRGPPSGSNSARQSPAPQHRPMGQTQPTYGTLDRYSWSDHKADCGPALPAGSWQALSVGCYPVELERGPRGFGFSLRGGKEYNMGLFILRLAEDGPAIKDGRIHVGDQIVEINNEPTQGITHTRAIELIQAGGSKVLLLLRPGTGLIPDYSLAPSSLCSYVKPDQQ</sequence>
<protein>
    <recommendedName>
        <fullName>Membrane-associated guanylate kinase, WW and PDZ domain-containing protein 3</fullName>
    </recommendedName>
    <alternativeName>
        <fullName>Membrane-associated guanylate kinase inverted 3</fullName>
        <shortName>MAGI-3</shortName>
    </alternativeName>
</protein>